<comment type="function">
    <text evidence="1">The central subunit of the protein translocation channel SecYEG. Consists of two halves formed by TMs 1-5 and 6-10. These two domains form a lateral gate at the front which open onto the bilayer between TMs 2 and 7, and are clamped together by SecE at the back. The channel is closed by both a pore ring composed of hydrophobic SecY resides and a short helix (helix 2A) on the extracellular side of the membrane which forms a plug. The plug probably moves laterally to allow the channel to open. The ring and the pore may move independently.</text>
</comment>
<comment type="subunit">
    <text evidence="1">Component of the Sec protein translocase complex. Heterotrimer consisting of SecY, SecE and SecG subunits. The heterotrimers can form oligomers, although 1 heterotrimer is thought to be able to translocate proteins. Interacts with the ribosome. Interacts with SecDF, and other proteins may be involved. Interacts with SecA.</text>
</comment>
<comment type="subcellular location">
    <subcellularLocation>
        <location evidence="1">Cell inner membrane</location>
        <topology evidence="1">Multi-pass membrane protein</topology>
    </subcellularLocation>
</comment>
<comment type="similarity">
    <text evidence="1">Belongs to the SecY/SEC61-alpha family.</text>
</comment>
<gene>
    <name evidence="1" type="primary">secY</name>
    <name type="ordered locus">Z4670</name>
    <name type="ordered locus">ECs4165</name>
</gene>
<feature type="chain" id="PRO_0000131722" description="Protein translocase subunit SecY">
    <location>
        <begin position="1"/>
        <end position="443"/>
    </location>
</feature>
<feature type="transmembrane region" description="Helical" evidence="1">
    <location>
        <begin position="24"/>
        <end position="44"/>
    </location>
</feature>
<feature type="transmembrane region" description="Helical" evidence="1">
    <location>
        <begin position="77"/>
        <end position="97"/>
    </location>
</feature>
<feature type="transmembrane region" description="Helical" evidence="1">
    <location>
        <begin position="125"/>
        <end position="145"/>
    </location>
</feature>
<feature type="transmembrane region" description="Helical" evidence="1">
    <location>
        <begin position="154"/>
        <end position="174"/>
    </location>
</feature>
<feature type="transmembrane region" description="Helical" evidence="1">
    <location>
        <begin position="183"/>
        <end position="203"/>
    </location>
</feature>
<feature type="transmembrane region" description="Helical" evidence="1">
    <location>
        <begin position="217"/>
        <end position="237"/>
    </location>
</feature>
<feature type="transmembrane region" description="Helical" evidence="1">
    <location>
        <begin position="274"/>
        <end position="294"/>
    </location>
</feature>
<feature type="transmembrane region" description="Helical" evidence="1">
    <location>
        <begin position="317"/>
        <end position="337"/>
    </location>
</feature>
<feature type="transmembrane region" description="Helical" evidence="1">
    <location>
        <begin position="370"/>
        <end position="390"/>
    </location>
</feature>
<feature type="transmembrane region" description="Helical" evidence="1">
    <location>
        <begin position="397"/>
        <end position="417"/>
    </location>
</feature>
<name>SECY_ECO57</name>
<organism>
    <name type="scientific">Escherichia coli O157:H7</name>
    <dbReference type="NCBI Taxonomy" id="83334"/>
    <lineage>
        <taxon>Bacteria</taxon>
        <taxon>Pseudomonadati</taxon>
        <taxon>Pseudomonadota</taxon>
        <taxon>Gammaproteobacteria</taxon>
        <taxon>Enterobacterales</taxon>
        <taxon>Enterobacteriaceae</taxon>
        <taxon>Escherichia</taxon>
    </lineage>
</organism>
<keyword id="KW-0997">Cell inner membrane</keyword>
<keyword id="KW-1003">Cell membrane</keyword>
<keyword id="KW-0472">Membrane</keyword>
<keyword id="KW-0653">Protein transport</keyword>
<keyword id="KW-1185">Reference proteome</keyword>
<keyword id="KW-0811">Translocation</keyword>
<keyword id="KW-0812">Transmembrane</keyword>
<keyword id="KW-1133">Transmembrane helix</keyword>
<keyword id="KW-0813">Transport</keyword>
<dbReference type="EMBL" id="AE005174">
    <property type="protein sequence ID" value="AAG58421.1"/>
    <property type="molecule type" value="Genomic_DNA"/>
</dbReference>
<dbReference type="EMBL" id="BA000007">
    <property type="protein sequence ID" value="BAB37588.1"/>
    <property type="molecule type" value="Genomic_DNA"/>
</dbReference>
<dbReference type="PIR" id="A85995">
    <property type="entry name" value="A85995"/>
</dbReference>
<dbReference type="PIR" id="E91149">
    <property type="entry name" value="E91149"/>
</dbReference>
<dbReference type="RefSeq" id="NP_312192.1">
    <property type="nucleotide sequence ID" value="NC_002695.1"/>
</dbReference>
<dbReference type="RefSeq" id="WP_001118861.1">
    <property type="nucleotide sequence ID" value="NZ_VOAI01000041.1"/>
</dbReference>
<dbReference type="SMR" id="P0AGA4"/>
<dbReference type="STRING" id="155864.Z4670"/>
<dbReference type="GeneID" id="86862302"/>
<dbReference type="GeneID" id="915941"/>
<dbReference type="KEGG" id="ece:Z4670"/>
<dbReference type="KEGG" id="ecs:ECs_4165"/>
<dbReference type="PATRIC" id="fig|386585.9.peg.4348"/>
<dbReference type="eggNOG" id="COG0201">
    <property type="taxonomic scope" value="Bacteria"/>
</dbReference>
<dbReference type="HOGENOM" id="CLU_030313_0_2_6"/>
<dbReference type="OMA" id="FAMWLGE"/>
<dbReference type="Proteomes" id="UP000000558">
    <property type="component" value="Chromosome"/>
</dbReference>
<dbReference type="Proteomes" id="UP000002519">
    <property type="component" value="Chromosome"/>
</dbReference>
<dbReference type="GO" id="GO:0005886">
    <property type="term" value="C:plasma membrane"/>
    <property type="evidence" value="ECO:0007669"/>
    <property type="project" value="UniProtKB-SubCell"/>
</dbReference>
<dbReference type="GO" id="GO:0065002">
    <property type="term" value="P:intracellular protein transmembrane transport"/>
    <property type="evidence" value="ECO:0007669"/>
    <property type="project" value="UniProtKB-UniRule"/>
</dbReference>
<dbReference type="GO" id="GO:0006605">
    <property type="term" value="P:protein targeting"/>
    <property type="evidence" value="ECO:0007669"/>
    <property type="project" value="UniProtKB-UniRule"/>
</dbReference>
<dbReference type="GO" id="GO:0043952">
    <property type="term" value="P:protein transport by the Sec complex"/>
    <property type="evidence" value="ECO:0007669"/>
    <property type="project" value="UniProtKB-UniRule"/>
</dbReference>
<dbReference type="FunFam" id="1.10.3370.10:FF:000001">
    <property type="entry name" value="Preprotein translocase subunit SecY"/>
    <property type="match status" value="1"/>
</dbReference>
<dbReference type="Gene3D" id="1.10.3370.10">
    <property type="entry name" value="SecY subunit domain"/>
    <property type="match status" value="1"/>
</dbReference>
<dbReference type="HAMAP" id="MF_01465">
    <property type="entry name" value="SecY"/>
    <property type="match status" value="1"/>
</dbReference>
<dbReference type="InterPro" id="IPR026593">
    <property type="entry name" value="SecY"/>
</dbReference>
<dbReference type="InterPro" id="IPR002208">
    <property type="entry name" value="SecY/SEC61-alpha"/>
</dbReference>
<dbReference type="InterPro" id="IPR030659">
    <property type="entry name" value="SecY_CS"/>
</dbReference>
<dbReference type="InterPro" id="IPR023201">
    <property type="entry name" value="SecY_dom_sf"/>
</dbReference>
<dbReference type="NCBIfam" id="TIGR00967">
    <property type="entry name" value="3a0501s007"/>
    <property type="match status" value="1"/>
</dbReference>
<dbReference type="PANTHER" id="PTHR10906">
    <property type="entry name" value="SECY/SEC61-ALPHA FAMILY MEMBER"/>
    <property type="match status" value="1"/>
</dbReference>
<dbReference type="Pfam" id="PF00344">
    <property type="entry name" value="SecY"/>
    <property type="match status" value="1"/>
</dbReference>
<dbReference type="PIRSF" id="PIRSF004557">
    <property type="entry name" value="SecY"/>
    <property type="match status" value="1"/>
</dbReference>
<dbReference type="PRINTS" id="PR00303">
    <property type="entry name" value="SECYTRNLCASE"/>
</dbReference>
<dbReference type="SUPFAM" id="SSF103491">
    <property type="entry name" value="Preprotein translocase SecY subunit"/>
    <property type="match status" value="1"/>
</dbReference>
<dbReference type="PROSITE" id="PS00755">
    <property type="entry name" value="SECY_1"/>
    <property type="match status" value="1"/>
</dbReference>
<dbReference type="PROSITE" id="PS00756">
    <property type="entry name" value="SECY_2"/>
    <property type="match status" value="1"/>
</dbReference>
<proteinExistence type="inferred from homology"/>
<sequence length="443" mass="48512">MAKQPGLDFQSAKGGLGELKRRLLFVIGALIVFRIGSFIPIPGIDAAVLAKLLEQQRGTIIEMFNMFSGGALSRASIFALGIMPYISASIIIQLLTVVHPTLAEIKKEGESGRRKISQYTRYGTLVLAIFQSIGIATGLPNMPGMQGLVINPGFAFYFTAVVSLVTGTMFLMWLGEQITERGIGNGISIIIFAGIVAGLPPAIAHTIEQARQGDLHFLVLLLVAVLVFAVTFFVVFVERGQRRIVVNYAKRQQGRRVYAAQSTHLPLKVNMAGVIPAIFASSIILFPATIASWFGGGTGWNWLTTISLYLQPGQPLYVLLYASAIIFFCFFYTALVFNPRETADNLKKSGAFVPGIRPGEQTAKYIDKVMTRLTLVGALYITFICLIPEFMRDAMKVPFYFGGTSLLIVVVVIMDFMAQVQTLMMSSQYESALKKANLKGYGR</sequence>
<accession>P0AGA4</accession>
<accession>P03844</accession>
<protein>
    <recommendedName>
        <fullName evidence="1">Protein translocase subunit SecY</fullName>
    </recommendedName>
</protein>
<reference key="1">
    <citation type="journal article" date="2001" name="Nature">
        <title>Genome sequence of enterohaemorrhagic Escherichia coli O157:H7.</title>
        <authorList>
            <person name="Perna N.T."/>
            <person name="Plunkett G. III"/>
            <person name="Burland V."/>
            <person name="Mau B."/>
            <person name="Glasner J.D."/>
            <person name="Rose D.J."/>
            <person name="Mayhew G.F."/>
            <person name="Evans P.S."/>
            <person name="Gregor J."/>
            <person name="Kirkpatrick H.A."/>
            <person name="Posfai G."/>
            <person name="Hackett J."/>
            <person name="Klink S."/>
            <person name="Boutin A."/>
            <person name="Shao Y."/>
            <person name="Miller L."/>
            <person name="Grotbeck E.J."/>
            <person name="Davis N.W."/>
            <person name="Lim A."/>
            <person name="Dimalanta E.T."/>
            <person name="Potamousis K."/>
            <person name="Apodaca J."/>
            <person name="Anantharaman T.S."/>
            <person name="Lin J."/>
            <person name="Yen G."/>
            <person name="Schwartz D.C."/>
            <person name="Welch R.A."/>
            <person name="Blattner F.R."/>
        </authorList>
    </citation>
    <scope>NUCLEOTIDE SEQUENCE [LARGE SCALE GENOMIC DNA]</scope>
    <source>
        <strain>O157:H7 / EDL933 / ATCC 700927 / EHEC</strain>
    </source>
</reference>
<reference key="2">
    <citation type="journal article" date="2001" name="DNA Res.">
        <title>Complete genome sequence of enterohemorrhagic Escherichia coli O157:H7 and genomic comparison with a laboratory strain K-12.</title>
        <authorList>
            <person name="Hayashi T."/>
            <person name="Makino K."/>
            <person name="Ohnishi M."/>
            <person name="Kurokawa K."/>
            <person name="Ishii K."/>
            <person name="Yokoyama K."/>
            <person name="Han C.-G."/>
            <person name="Ohtsubo E."/>
            <person name="Nakayama K."/>
            <person name="Murata T."/>
            <person name="Tanaka M."/>
            <person name="Tobe T."/>
            <person name="Iida T."/>
            <person name="Takami H."/>
            <person name="Honda T."/>
            <person name="Sasakawa C."/>
            <person name="Ogasawara N."/>
            <person name="Yasunaga T."/>
            <person name="Kuhara S."/>
            <person name="Shiba T."/>
            <person name="Hattori M."/>
            <person name="Shinagawa H."/>
        </authorList>
    </citation>
    <scope>NUCLEOTIDE SEQUENCE [LARGE SCALE GENOMIC DNA]</scope>
    <source>
        <strain>O157:H7 / Sakai / RIMD 0509952 / EHEC</strain>
    </source>
</reference>
<evidence type="ECO:0000255" key="1">
    <source>
        <dbReference type="HAMAP-Rule" id="MF_01465"/>
    </source>
</evidence>